<name>RUVA_STAA1</name>
<dbReference type="EMBL" id="AP009324">
    <property type="protein sequence ID" value="BAF78512.1"/>
    <property type="molecule type" value="Genomic_DNA"/>
</dbReference>
<dbReference type="RefSeq" id="WP_000271550.1">
    <property type="nucleotide sequence ID" value="NC_009782.1"/>
</dbReference>
<dbReference type="SMR" id="A7X358"/>
<dbReference type="KEGG" id="saw:SAHV_1629"/>
<dbReference type="HOGENOM" id="CLU_087936_1_0_9"/>
<dbReference type="GO" id="GO:0005737">
    <property type="term" value="C:cytoplasm"/>
    <property type="evidence" value="ECO:0007669"/>
    <property type="project" value="UniProtKB-SubCell"/>
</dbReference>
<dbReference type="GO" id="GO:0009379">
    <property type="term" value="C:Holliday junction helicase complex"/>
    <property type="evidence" value="ECO:0007669"/>
    <property type="project" value="InterPro"/>
</dbReference>
<dbReference type="GO" id="GO:0048476">
    <property type="term" value="C:Holliday junction resolvase complex"/>
    <property type="evidence" value="ECO:0007669"/>
    <property type="project" value="UniProtKB-UniRule"/>
</dbReference>
<dbReference type="GO" id="GO:0005524">
    <property type="term" value="F:ATP binding"/>
    <property type="evidence" value="ECO:0007669"/>
    <property type="project" value="InterPro"/>
</dbReference>
<dbReference type="GO" id="GO:0000400">
    <property type="term" value="F:four-way junction DNA binding"/>
    <property type="evidence" value="ECO:0007669"/>
    <property type="project" value="UniProtKB-UniRule"/>
</dbReference>
<dbReference type="GO" id="GO:0009378">
    <property type="term" value="F:four-way junction helicase activity"/>
    <property type="evidence" value="ECO:0007669"/>
    <property type="project" value="InterPro"/>
</dbReference>
<dbReference type="GO" id="GO:0006310">
    <property type="term" value="P:DNA recombination"/>
    <property type="evidence" value="ECO:0007669"/>
    <property type="project" value="UniProtKB-UniRule"/>
</dbReference>
<dbReference type="GO" id="GO:0006281">
    <property type="term" value="P:DNA repair"/>
    <property type="evidence" value="ECO:0007669"/>
    <property type="project" value="UniProtKB-UniRule"/>
</dbReference>
<dbReference type="CDD" id="cd14332">
    <property type="entry name" value="UBA_RuvA_C"/>
    <property type="match status" value="1"/>
</dbReference>
<dbReference type="Gene3D" id="1.10.150.20">
    <property type="entry name" value="5' to 3' exonuclease, C-terminal subdomain"/>
    <property type="match status" value="1"/>
</dbReference>
<dbReference type="Gene3D" id="1.10.8.10">
    <property type="entry name" value="DNA helicase RuvA subunit, C-terminal domain"/>
    <property type="match status" value="1"/>
</dbReference>
<dbReference type="Gene3D" id="2.40.50.140">
    <property type="entry name" value="Nucleic acid-binding proteins"/>
    <property type="match status" value="1"/>
</dbReference>
<dbReference type="HAMAP" id="MF_00031">
    <property type="entry name" value="DNA_HJ_migration_RuvA"/>
    <property type="match status" value="1"/>
</dbReference>
<dbReference type="InterPro" id="IPR013849">
    <property type="entry name" value="DNA_helicase_Holl-junc_RuvA_I"/>
</dbReference>
<dbReference type="InterPro" id="IPR003583">
    <property type="entry name" value="Hlx-hairpin-Hlx_DNA-bd_motif"/>
</dbReference>
<dbReference type="InterPro" id="IPR012340">
    <property type="entry name" value="NA-bd_OB-fold"/>
</dbReference>
<dbReference type="InterPro" id="IPR000085">
    <property type="entry name" value="RuvA"/>
</dbReference>
<dbReference type="InterPro" id="IPR010994">
    <property type="entry name" value="RuvA_2-like"/>
</dbReference>
<dbReference type="InterPro" id="IPR011114">
    <property type="entry name" value="RuvA_C"/>
</dbReference>
<dbReference type="InterPro" id="IPR036267">
    <property type="entry name" value="RuvA_C_sf"/>
</dbReference>
<dbReference type="NCBIfam" id="TIGR00084">
    <property type="entry name" value="ruvA"/>
    <property type="match status" value="1"/>
</dbReference>
<dbReference type="Pfam" id="PF14520">
    <property type="entry name" value="HHH_5"/>
    <property type="match status" value="1"/>
</dbReference>
<dbReference type="Pfam" id="PF07499">
    <property type="entry name" value="RuvA_C"/>
    <property type="match status" value="1"/>
</dbReference>
<dbReference type="Pfam" id="PF01330">
    <property type="entry name" value="RuvA_N"/>
    <property type="match status" value="1"/>
</dbReference>
<dbReference type="SMART" id="SM00278">
    <property type="entry name" value="HhH1"/>
    <property type="match status" value="2"/>
</dbReference>
<dbReference type="SUPFAM" id="SSF46929">
    <property type="entry name" value="DNA helicase RuvA subunit, C-terminal domain"/>
    <property type="match status" value="1"/>
</dbReference>
<dbReference type="SUPFAM" id="SSF50249">
    <property type="entry name" value="Nucleic acid-binding proteins"/>
    <property type="match status" value="1"/>
</dbReference>
<dbReference type="SUPFAM" id="SSF47781">
    <property type="entry name" value="RuvA domain 2-like"/>
    <property type="match status" value="1"/>
</dbReference>
<feature type="chain" id="PRO_1000002562" description="Holliday junction branch migration complex subunit RuvA">
    <location>
        <begin position="1"/>
        <end position="200"/>
    </location>
</feature>
<feature type="region of interest" description="Domain I" evidence="1">
    <location>
        <begin position="1"/>
        <end position="63"/>
    </location>
</feature>
<feature type="region of interest" description="Domain II" evidence="1">
    <location>
        <begin position="64"/>
        <end position="142"/>
    </location>
</feature>
<feature type="region of interest" description="Flexible linker" evidence="1">
    <location>
        <begin position="143"/>
        <end position="149"/>
    </location>
</feature>
<feature type="region of interest" description="Domain III" evidence="1">
    <location>
        <begin position="150"/>
        <end position="200"/>
    </location>
</feature>
<accession>A7X358</accession>
<reference key="1">
    <citation type="journal article" date="2008" name="Antimicrob. Agents Chemother.">
        <title>Mutated response regulator graR is responsible for phenotypic conversion of Staphylococcus aureus from heterogeneous vancomycin-intermediate resistance to vancomycin-intermediate resistance.</title>
        <authorList>
            <person name="Neoh H.-M."/>
            <person name="Cui L."/>
            <person name="Yuzawa H."/>
            <person name="Takeuchi F."/>
            <person name="Matsuo M."/>
            <person name="Hiramatsu K."/>
        </authorList>
    </citation>
    <scope>NUCLEOTIDE SEQUENCE [LARGE SCALE GENOMIC DNA]</scope>
    <source>
        <strain>Mu3 / ATCC 700698</strain>
    </source>
</reference>
<proteinExistence type="inferred from homology"/>
<gene>
    <name evidence="1" type="primary">ruvA</name>
    <name type="ordered locus">SAHV_1629</name>
</gene>
<evidence type="ECO:0000255" key="1">
    <source>
        <dbReference type="HAMAP-Rule" id="MF_00031"/>
    </source>
</evidence>
<comment type="function">
    <text evidence="1">The RuvA-RuvB-RuvC complex processes Holliday junction (HJ) DNA during genetic recombination and DNA repair, while the RuvA-RuvB complex plays an important role in the rescue of blocked DNA replication forks via replication fork reversal (RFR). RuvA specifically binds to HJ cruciform DNA, conferring on it an open structure. The RuvB hexamer acts as an ATP-dependent pump, pulling dsDNA into and through the RuvAB complex. HJ branch migration allows RuvC to scan DNA until it finds its consensus sequence, where it cleaves and resolves the cruciform DNA.</text>
</comment>
<comment type="subunit">
    <text evidence="1">Homotetramer. Forms an RuvA(8)-RuvB(12)-Holliday junction (HJ) complex. HJ DNA is sandwiched between 2 RuvA tetramers; dsDNA enters through RuvA and exits via RuvB. An RuvB hexamer assembles on each DNA strand where it exits the tetramer. Each RuvB hexamer is contacted by two RuvA subunits (via domain III) on 2 adjacent RuvB subunits; this complex drives branch migration. In the full resolvosome a probable DNA-RuvA(4)-RuvB(12)-RuvC(2) complex forms which resolves the HJ.</text>
</comment>
<comment type="subcellular location">
    <subcellularLocation>
        <location evidence="1">Cytoplasm</location>
    </subcellularLocation>
</comment>
<comment type="domain">
    <text evidence="1">Has three domains with a flexible linker between the domains II and III and assumes an 'L' shape. Domain III is highly mobile and contacts RuvB.</text>
</comment>
<comment type="similarity">
    <text evidence="1">Belongs to the RuvA family.</text>
</comment>
<protein>
    <recommendedName>
        <fullName evidence="1">Holliday junction branch migration complex subunit RuvA</fullName>
    </recommendedName>
</protein>
<sequence>MYAYVKGKLTHLYPTHVVVETAGVGYEIQTPNSYRFQKHLDHEVLIRTSLIVREDAQLLYGFSSEEEKDMFLSLIKVTGIGPKSALAILATSTPNEVKRAIENENDTYLTKFPGIGKKTARQIVLDLKGKVKITEEDSDSLLQVDATSTVQDQFVQEAMLALEALGYSKRELAKVEKTLNKNKYDSVDEAVKAGLQLVVS</sequence>
<keyword id="KW-0963">Cytoplasm</keyword>
<keyword id="KW-0227">DNA damage</keyword>
<keyword id="KW-0233">DNA recombination</keyword>
<keyword id="KW-0234">DNA repair</keyword>
<keyword id="KW-0238">DNA-binding</keyword>
<organism>
    <name type="scientific">Staphylococcus aureus (strain Mu3 / ATCC 700698)</name>
    <dbReference type="NCBI Taxonomy" id="418127"/>
    <lineage>
        <taxon>Bacteria</taxon>
        <taxon>Bacillati</taxon>
        <taxon>Bacillota</taxon>
        <taxon>Bacilli</taxon>
        <taxon>Bacillales</taxon>
        <taxon>Staphylococcaceae</taxon>
        <taxon>Staphylococcus</taxon>
    </lineage>
</organism>